<organism>
    <name type="scientific">Yarrowia lipolytica (strain CLIB 122 / E 150)</name>
    <name type="common">Yeast</name>
    <name type="synonym">Candida lipolytica</name>
    <dbReference type="NCBI Taxonomy" id="284591"/>
    <lineage>
        <taxon>Eukaryota</taxon>
        <taxon>Fungi</taxon>
        <taxon>Dikarya</taxon>
        <taxon>Ascomycota</taxon>
        <taxon>Saccharomycotina</taxon>
        <taxon>Dipodascomycetes</taxon>
        <taxon>Dipodascales</taxon>
        <taxon>Dipodascales incertae sedis</taxon>
        <taxon>Yarrowia</taxon>
    </lineage>
</organism>
<feature type="signal peptide" evidence="2">
    <location>
        <begin position="1"/>
        <end status="unknown"/>
    </location>
</feature>
<feature type="chain" id="PRO_0000008627" description="Lipase 1">
    <location>
        <begin status="unknown"/>
        <end position="486"/>
    </location>
</feature>
<feature type="active site" description="Acyl-ester intermediate" evidence="3">
    <location>
        <position position="193"/>
    </location>
</feature>
<feature type="active site" description="Charge relay system" evidence="1">
    <location>
        <position position="303"/>
    </location>
</feature>
<feature type="active site" description="Charge relay system" evidence="1">
    <location>
        <position position="392"/>
    </location>
</feature>
<feature type="glycosylation site" description="N-linked (GlcNAc...) asparagine" evidence="2">
    <location>
        <position position="332"/>
    </location>
</feature>
<feature type="disulfide bond" evidence="1">
    <location>
        <begin position="58"/>
        <end position="82"/>
    </location>
</feature>
<feature type="sequence conflict" description="In Ref. 1; CAA90323." evidence="4" ref="1">
    <original>IP</original>
    <variation>RR</variation>
    <location>
        <begin position="31"/>
        <end position="32"/>
    </location>
</feature>
<feature type="sequence conflict" description="In Ref. 1; CAA90323." evidence="4" ref="1">
    <original>N</original>
    <variation>D</variation>
    <location>
        <position position="237"/>
    </location>
</feature>
<reference key="1">
    <citation type="thesis" date="1996" institute="University of Salamanca" country="Spain">
        <authorList>
            <person name="Gonzalez F."/>
        </authorList>
    </citation>
    <scope>NUCLEOTIDE SEQUENCE [GENOMIC DNA]</scope>
    <source>
        <strain>ATCC 90811 / CLIB 163 / JM12</strain>
    </source>
</reference>
<reference key="2">
    <citation type="journal article" date="2004" name="Nature">
        <title>Genome evolution in yeasts.</title>
        <authorList>
            <person name="Dujon B."/>
            <person name="Sherman D."/>
            <person name="Fischer G."/>
            <person name="Durrens P."/>
            <person name="Casaregola S."/>
            <person name="Lafontaine I."/>
            <person name="de Montigny J."/>
            <person name="Marck C."/>
            <person name="Neuveglise C."/>
            <person name="Talla E."/>
            <person name="Goffard N."/>
            <person name="Frangeul L."/>
            <person name="Aigle M."/>
            <person name="Anthouard V."/>
            <person name="Babour A."/>
            <person name="Barbe V."/>
            <person name="Barnay S."/>
            <person name="Blanchin S."/>
            <person name="Beckerich J.-M."/>
            <person name="Beyne E."/>
            <person name="Bleykasten C."/>
            <person name="Boisrame A."/>
            <person name="Boyer J."/>
            <person name="Cattolico L."/>
            <person name="Confanioleri F."/>
            <person name="de Daruvar A."/>
            <person name="Despons L."/>
            <person name="Fabre E."/>
            <person name="Fairhead C."/>
            <person name="Ferry-Dumazet H."/>
            <person name="Groppi A."/>
            <person name="Hantraye F."/>
            <person name="Hennequin C."/>
            <person name="Jauniaux N."/>
            <person name="Joyet P."/>
            <person name="Kachouri R."/>
            <person name="Kerrest A."/>
            <person name="Koszul R."/>
            <person name="Lemaire M."/>
            <person name="Lesur I."/>
            <person name="Ma L."/>
            <person name="Muller H."/>
            <person name="Nicaud J.-M."/>
            <person name="Nikolski M."/>
            <person name="Oztas S."/>
            <person name="Ozier-Kalogeropoulos O."/>
            <person name="Pellenz S."/>
            <person name="Potier S."/>
            <person name="Richard G.-F."/>
            <person name="Straub M.-L."/>
            <person name="Suleau A."/>
            <person name="Swennen D."/>
            <person name="Tekaia F."/>
            <person name="Wesolowski-Louvel M."/>
            <person name="Westhof E."/>
            <person name="Wirth B."/>
            <person name="Zeniou-Meyer M."/>
            <person name="Zivanovic Y."/>
            <person name="Bolotin-Fukuhara M."/>
            <person name="Thierry A."/>
            <person name="Bouchier C."/>
            <person name="Caudron B."/>
            <person name="Scarpelli C."/>
            <person name="Gaillardin C."/>
            <person name="Weissenbach J."/>
            <person name="Wincker P."/>
            <person name="Souciet J.-L."/>
        </authorList>
    </citation>
    <scope>NUCLEOTIDE SEQUENCE [LARGE SCALE GENOMIC DNA]</scope>
    <source>
        <strain>CLIB 122 / E 150</strain>
    </source>
</reference>
<protein>
    <recommendedName>
        <fullName>Lipase 1</fullName>
        <ecNumber>3.1.1.3</ecNumber>
    </recommendedName>
</protein>
<evidence type="ECO:0000250" key="1"/>
<evidence type="ECO:0000255" key="2"/>
<evidence type="ECO:0000255" key="3">
    <source>
        <dbReference type="PROSITE-ProRule" id="PRU10039"/>
    </source>
</evidence>
<evidence type="ECO:0000305" key="4"/>
<name>LIP1_YARLI</name>
<dbReference type="EC" id="3.1.1.3"/>
<dbReference type="EMBL" id="Z50020">
    <property type="protein sequence ID" value="CAA90323.1"/>
    <property type="molecule type" value="Genomic_DNA"/>
</dbReference>
<dbReference type="EMBL" id="CR382131">
    <property type="protein sequence ID" value="CAG79381.1"/>
    <property type="molecule type" value="Genomic_DNA"/>
</dbReference>
<dbReference type="RefSeq" id="XP_503790.1">
    <property type="nucleotide sequence ID" value="XM_503790.1"/>
</dbReference>
<dbReference type="SMR" id="Q99156"/>
<dbReference type="STRING" id="284591.Q99156"/>
<dbReference type="ESTHER" id="yarli-lipa1">
    <property type="family name" value="Fungal_carboxylesterase_lipase"/>
</dbReference>
<dbReference type="GlyCosmos" id="Q99156">
    <property type="glycosylation" value="1 site, No reported glycans"/>
</dbReference>
<dbReference type="EnsemblFungi" id="CAG79381">
    <property type="protein sequence ID" value="CAG79381"/>
    <property type="gene ID" value="YALI0_E10659g"/>
</dbReference>
<dbReference type="KEGG" id="yli:2912789"/>
<dbReference type="VEuPathDB" id="FungiDB:YALI0_E10659g"/>
<dbReference type="HOGENOM" id="CLU_006586_14_0_1"/>
<dbReference type="InParanoid" id="Q99156"/>
<dbReference type="OMA" id="IEWVYRN"/>
<dbReference type="OrthoDB" id="105589at4891"/>
<dbReference type="Proteomes" id="UP000001300">
    <property type="component" value="Chromosome E"/>
</dbReference>
<dbReference type="GO" id="GO:0004806">
    <property type="term" value="F:triacylglycerol lipase activity"/>
    <property type="evidence" value="ECO:0007669"/>
    <property type="project" value="UniProtKB-EC"/>
</dbReference>
<dbReference type="GO" id="GO:0016042">
    <property type="term" value="P:lipid catabolic process"/>
    <property type="evidence" value="ECO:0007669"/>
    <property type="project" value="UniProtKB-KW"/>
</dbReference>
<dbReference type="Gene3D" id="3.40.50.1820">
    <property type="entry name" value="alpha/beta hydrolase"/>
    <property type="match status" value="1"/>
</dbReference>
<dbReference type="InterPro" id="IPR029058">
    <property type="entry name" value="AB_hydrolase_fold"/>
</dbReference>
<dbReference type="InterPro" id="IPR002018">
    <property type="entry name" value="CarbesteraseB"/>
</dbReference>
<dbReference type="InterPro" id="IPR019826">
    <property type="entry name" value="Carboxylesterase_B_AS"/>
</dbReference>
<dbReference type="PANTHER" id="PTHR43142">
    <property type="entry name" value="CARBOXYLIC ESTER HYDROLASE"/>
    <property type="match status" value="1"/>
</dbReference>
<dbReference type="PANTHER" id="PTHR43142:SF1">
    <property type="entry name" value="CARBOXYLIC ESTER HYDROLASE"/>
    <property type="match status" value="1"/>
</dbReference>
<dbReference type="Pfam" id="PF00135">
    <property type="entry name" value="COesterase"/>
    <property type="match status" value="1"/>
</dbReference>
<dbReference type="SUPFAM" id="SSF53474">
    <property type="entry name" value="alpha/beta-Hydrolases"/>
    <property type="match status" value="1"/>
</dbReference>
<dbReference type="PROSITE" id="PS00122">
    <property type="entry name" value="CARBOXYLESTERASE_B_1"/>
    <property type="match status" value="1"/>
</dbReference>
<comment type="catalytic activity">
    <reaction>
        <text>a triacylglycerol + H2O = a diacylglycerol + a fatty acid + H(+)</text>
        <dbReference type="Rhea" id="RHEA:12044"/>
        <dbReference type="ChEBI" id="CHEBI:15377"/>
        <dbReference type="ChEBI" id="CHEBI:15378"/>
        <dbReference type="ChEBI" id="CHEBI:17855"/>
        <dbReference type="ChEBI" id="CHEBI:18035"/>
        <dbReference type="ChEBI" id="CHEBI:28868"/>
        <dbReference type="EC" id="3.1.1.3"/>
    </reaction>
</comment>
<comment type="similarity">
    <text evidence="4">Belongs to the type-B carboxylesterase/lipase family.</text>
</comment>
<gene>
    <name type="primary">LIP1</name>
    <name type="ordered locus">YALI0E10659g</name>
</gene>
<sequence>MSVTSTSLNGTFNGISEDGIEIFKGIKYANIPYRWAYAERIDDYDNGVFDCTQEGMACPQVLPFDYNIEKGPKEMPFDEFECSNLMITRPQGATNLPVFVWIHGGGNLAGNGYCSDHNPVPFVKHSIVAGRPVLHVMIEYRLSAFGYLAVPDTNGNWVGNWGARDQYTALQWISKHIVEFGGDPSQITIGGESAGSIGLHALMVHESMKPKEECIIHNVILSSGTMDRMGTGTISENAFKPIYDGIKTLVGDINTCSADELLEAQIKAGLDLGFYLQDDFFPPDWRNVRFKVSRVLLSDVIVDGTNFKNKINPAVRVTPENDFDHKVFKLYNISTEDTWEDYHYKMMLFKGDETFIRGNQQLELLFEQENIPVWRQLFDQIHPNDPSRLCHHAVDLYYMWDNWEMPEDKHAVARQYQDTLTKFVYGQDPWPVDKLHYVHDNQFEILDKSQFGDFRNVPALKFLLGFSAEELGELTKKYTGEGHYTL</sequence>
<proteinExistence type="inferred from homology"/>
<accession>Q99156</accession>
<accession>Q6C6C2</accession>
<keyword id="KW-1015">Disulfide bond</keyword>
<keyword id="KW-0325">Glycoprotein</keyword>
<keyword id="KW-0378">Hydrolase</keyword>
<keyword id="KW-0442">Lipid degradation</keyword>
<keyword id="KW-0443">Lipid metabolism</keyword>
<keyword id="KW-1185">Reference proteome</keyword>
<keyword id="KW-0732">Signal</keyword>